<organism>
    <name type="scientific">Vibrio cholerae serotype O1 (strain ATCC 39315 / El Tor Inaba N16961)</name>
    <dbReference type="NCBI Taxonomy" id="243277"/>
    <lineage>
        <taxon>Bacteria</taxon>
        <taxon>Pseudomonadati</taxon>
        <taxon>Pseudomonadota</taxon>
        <taxon>Gammaproteobacteria</taxon>
        <taxon>Vibrionales</taxon>
        <taxon>Vibrionaceae</taxon>
        <taxon>Vibrio</taxon>
    </lineage>
</organism>
<gene>
    <name evidence="1" type="primary">pstB1</name>
    <name type="ordered locus">VC_0726</name>
</gene>
<comment type="function">
    <text evidence="1">Part of the ABC transporter complex PstSACB involved in phosphate import. Responsible for energy coupling to the transport system.</text>
</comment>
<comment type="catalytic activity">
    <reaction evidence="1">
        <text>phosphate(out) + ATP + H2O = ADP + 2 phosphate(in) + H(+)</text>
        <dbReference type="Rhea" id="RHEA:24440"/>
        <dbReference type="ChEBI" id="CHEBI:15377"/>
        <dbReference type="ChEBI" id="CHEBI:15378"/>
        <dbReference type="ChEBI" id="CHEBI:30616"/>
        <dbReference type="ChEBI" id="CHEBI:43474"/>
        <dbReference type="ChEBI" id="CHEBI:456216"/>
        <dbReference type="EC" id="7.3.2.1"/>
    </reaction>
</comment>
<comment type="subunit">
    <text evidence="1">The complex is composed of two ATP-binding proteins (PstB), two transmembrane proteins (PstC and PstA) and a solute-binding protein (PstS).</text>
</comment>
<comment type="subcellular location">
    <subcellularLocation>
        <location evidence="1">Cell inner membrane</location>
        <topology evidence="1">Peripheral membrane protein</topology>
    </subcellularLocation>
</comment>
<comment type="similarity">
    <text evidence="1">Belongs to the ABC transporter superfamily. Phosphate importer (TC 3.A.1.7) family.</text>
</comment>
<proteinExistence type="inferred from homology"/>
<feature type="chain" id="PRO_0000092926" description="Phosphate import ATP-binding protein PstB 1">
    <location>
        <begin position="1"/>
        <end position="273"/>
    </location>
</feature>
<feature type="domain" description="ABC transporter" evidence="1">
    <location>
        <begin position="27"/>
        <end position="268"/>
    </location>
</feature>
<feature type="binding site" evidence="1">
    <location>
        <begin position="59"/>
        <end position="66"/>
    </location>
    <ligand>
        <name>ATP</name>
        <dbReference type="ChEBI" id="CHEBI:30616"/>
    </ligand>
</feature>
<evidence type="ECO:0000255" key="1">
    <source>
        <dbReference type="HAMAP-Rule" id="MF_01702"/>
    </source>
</evidence>
<accession>Q9KU04</accession>
<sequence length="273" mass="30589">MYSANPTLGYYVPPLDVNNLTDQQTAISIEHLSLYYQQSRALSDISMRIPKGQVTAFIGPSGCGKSTLLRCINRMNDLVEGTRVEGEVKLHGKNIYHPDVDVPTLRRRVGMVFQRPNPFPKSIYENVVYGLRLQGIKNSRALDDAAEQSLRAAALWDEVKHRLHENAFGLSGGQQQRLVIARAIAIEPEVLLLDEPTSALDPISTLTIEELIHDLKTKYTVVIVTHNMQQAARVSDHTAFIHMGKLIEYADTDSIFTSPLKKQTEDYITGRYG</sequence>
<protein>
    <recommendedName>
        <fullName evidence="1">Phosphate import ATP-binding protein PstB 1</fullName>
        <ecNumber evidence="1">7.3.2.1</ecNumber>
    </recommendedName>
    <alternativeName>
        <fullName evidence="1">ABC phosphate transporter 1</fullName>
    </alternativeName>
    <alternativeName>
        <fullName evidence="1">Phosphate-transporting ATPase 1</fullName>
    </alternativeName>
</protein>
<name>PSTB1_VIBCH</name>
<reference key="1">
    <citation type="journal article" date="2000" name="Nature">
        <title>DNA sequence of both chromosomes of the cholera pathogen Vibrio cholerae.</title>
        <authorList>
            <person name="Heidelberg J.F."/>
            <person name="Eisen J.A."/>
            <person name="Nelson W.C."/>
            <person name="Clayton R.A."/>
            <person name="Gwinn M.L."/>
            <person name="Dodson R.J."/>
            <person name="Haft D.H."/>
            <person name="Hickey E.K."/>
            <person name="Peterson J.D."/>
            <person name="Umayam L.A."/>
            <person name="Gill S.R."/>
            <person name="Nelson K.E."/>
            <person name="Read T.D."/>
            <person name="Tettelin H."/>
            <person name="Richardson D.L."/>
            <person name="Ermolaeva M.D."/>
            <person name="Vamathevan J.J."/>
            <person name="Bass S."/>
            <person name="Qin H."/>
            <person name="Dragoi I."/>
            <person name="Sellers P."/>
            <person name="McDonald L.A."/>
            <person name="Utterback T.R."/>
            <person name="Fleischmann R.D."/>
            <person name="Nierman W.C."/>
            <person name="White O."/>
            <person name="Salzberg S.L."/>
            <person name="Smith H.O."/>
            <person name="Colwell R.R."/>
            <person name="Mekalanos J.J."/>
            <person name="Venter J.C."/>
            <person name="Fraser C.M."/>
        </authorList>
    </citation>
    <scope>NUCLEOTIDE SEQUENCE [LARGE SCALE GENOMIC DNA]</scope>
    <source>
        <strain>ATCC 39315 / El Tor Inaba N16961</strain>
    </source>
</reference>
<dbReference type="EC" id="7.3.2.1" evidence="1"/>
<dbReference type="EMBL" id="AE003852">
    <property type="protein sequence ID" value="AAF93891.1"/>
    <property type="molecule type" value="Genomic_DNA"/>
</dbReference>
<dbReference type="PIR" id="H82286">
    <property type="entry name" value="H82286"/>
</dbReference>
<dbReference type="RefSeq" id="NP_230375.1">
    <property type="nucleotide sequence ID" value="NC_002505.1"/>
</dbReference>
<dbReference type="SMR" id="Q9KU04"/>
<dbReference type="STRING" id="243277.VC_0726"/>
<dbReference type="DNASU" id="2615735"/>
<dbReference type="EnsemblBacteria" id="AAF93891">
    <property type="protein sequence ID" value="AAF93891"/>
    <property type="gene ID" value="VC_0726"/>
</dbReference>
<dbReference type="KEGG" id="vch:VC_0726"/>
<dbReference type="PATRIC" id="fig|243277.26.peg.694"/>
<dbReference type="eggNOG" id="COG1117">
    <property type="taxonomic scope" value="Bacteria"/>
</dbReference>
<dbReference type="HOGENOM" id="CLU_000604_1_22_6"/>
<dbReference type="Proteomes" id="UP000000584">
    <property type="component" value="Chromosome 1"/>
</dbReference>
<dbReference type="GO" id="GO:0005886">
    <property type="term" value="C:plasma membrane"/>
    <property type="evidence" value="ECO:0007669"/>
    <property type="project" value="UniProtKB-SubCell"/>
</dbReference>
<dbReference type="GO" id="GO:0005524">
    <property type="term" value="F:ATP binding"/>
    <property type="evidence" value="ECO:0007669"/>
    <property type="project" value="UniProtKB-KW"/>
</dbReference>
<dbReference type="GO" id="GO:0016887">
    <property type="term" value="F:ATP hydrolysis activity"/>
    <property type="evidence" value="ECO:0007669"/>
    <property type="project" value="InterPro"/>
</dbReference>
<dbReference type="GO" id="GO:0015415">
    <property type="term" value="F:ATPase-coupled phosphate ion transmembrane transporter activity"/>
    <property type="evidence" value="ECO:0007669"/>
    <property type="project" value="UniProtKB-EC"/>
</dbReference>
<dbReference type="GO" id="GO:0035435">
    <property type="term" value="P:phosphate ion transmembrane transport"/>
    <property type="evidence" value="ECO:0007669"/>
    <property type="project" value="InterPro"/>
</dbReference>
<dbReference type="CDD" id="cd03260">
    <property type="entry name" value="ABC_PstB_phosphate_transporter"/>
    <property type="match status" value="1"/>
</dbReference>
<dbReference type="FunFam" id="3.40.50.300:FF:000132">
    <property type="entry name" value="Phosphate import ATP-binding protein PstB"/>
    <property type="match status" value="1"/>
</dbReference>
<dbReference type="Gene3D" id="3.40.50.300">
    <property type="entry name" value="P-loop containing nucleotide triphosphate hydrolases"/>
    <property type="match status" value="1"/>
</dbReference>
<dbReference type="InterPro" id="IPR003593">
    <property type="entry name" value="AAA+_ATPase"/>
</dbReference>
<dbReference type="InterPro" id="IPR003439">
    <property type="entry name" value="ABC_transporter-like_ATP-bd"/>
</dbReference>
<dbReference type="InterPro" id="IPR017871">
    <property type="entry name" value="ABC_transporter-like_CS"/>
</dbReference>
<dbReference type="InterPro" id="IPR027417">
    <property type="entry name" value="P-loop_NTPase"/>
</dbReference>
<dbReference type="InterPro" id="IPR005670">
    <property type="entry name" value="PstB-like"/>
</dbReference>
<dbReference type="NCBIfam" id="TIGR00972">
    <property type="entry name" value="3a0107s01c2"/>
    <property type="match status" value="1"/>
</dbReference>
<dbReference type="PANTHER" id="PTHR43423">
    <property type="entry name" value="ABC TRANSPORTER I FAMILY MEMBER 17"/>
    <property type="match status" value="1"/>
</dbReference>
<dbReference type="PANTHER" id="PTHR43423:SF12">
    <property type="entry name" value="IRON EXPORT ATP-BINDING PROTEIN FETA-RELATED"/>
    <property type="match status" value="1"/>
</dbReference>
<dbReference type="Pfam" id="PF00005">
    <property type="entry name" value="ABC_tran"/>
    <property type="match status" value="1"/>
</dbReference>
<dbReference type="SMART" id="SM00382">
    <property type="entry name" value="AAA"/>
    <property type="match status" value="1"/>
</dbReference>
<dbReference type="SUPFAM" id="SSF52540">
    <property type="entry name" value="P-loop containing nucleoside triphosphate hydrolases"/>
    <property type="match status" value="1"/>
</dbReference>
<dbReference type="PROSITE" id="PS00211">
    <property type="entry name" value="ABC_TRANSPORTER_1"/>
    <property type="match status" value="1"/>
</dbReference>
<dbReference type="PROSITE" id="PS50893">
    <property type="entry name" value="ABC_TRANSPORTER_2"/>
    <property type="match status" value="1"/>
</dbReference>
<dbReference type="PROSITE" id="PS51238">
    <property type="entry name" value="PSTB"/>
    <property type="match status" value="1"/>
</dbReference>
<keyword id="KW-0067">ATP-binding</keyword>
<keyword id="KW-0997">Cell inner membrane</keyword>
<keyword id="KW-1003">Cell membrane</keyword>
<keyword id="KW-0472">Membrane</keyword>
<keyword id="KW-0547">Nucleotide-binding</keyword>
<keyword id="KW-0592">Phosphate transport</keyword>
<keyword id="KW-1185">Reference proteome</keyword>
<keyword id="KW-1278">Translocase</keyword>
<keyword id="KW-0813">Transport</keyword>